<comment type="catalytic activity">
    <reaction>
        <text>(2R,3S)-3-phenylcyclohexa-3,5-diene-1,2-diol + NAD(+) = biphenyl-2,3-diol + NADH + H(+)</text>
        <dbReference type="Rhea" id="RHEA:17033"/>
        <dbReference type="ChEBI" id="CHEBI:15378"/>
        <dbReference type="ChEBI" id="CHEBI:16205"/>
        <dbReference type="ChEBI" id="CHEBI:32922"/>
        <dbReference type="ChEBI" id="CHEBI:57540"/>
        <dbReference type="ChEBI" id="CHEBI:57945"/>
        <dbReference type="EC" id="1.3.1.56"/>
    </reaction>
</comment>
<comment type="pathway">
    <text>Xenobiotic degradation; biphenyl degradation; 2-hydroxy-2,4-pentadienoate and benzoate from biphenyl: step 2/4.</text>
</comment>
<comment type="subunit">
    <text>Homotetramer.</text>
</comment>
<comment type="similarity">
    <text evidence="3">Belongs to the short-chain dehydrogenases/reductases (SDR) family.</text>
</comment>
<reference key="1">
    <citation type="journal article" date="1996" name="Appl. Environ. Microbiol.">
        <title>Characterization of active recombinant 2,3-dihydro-2,3-dihydroxybiphenyl dehydrogenase from Comamonas testosteroni B-356 and sequence of the encoding gene (bphB).</title>
        <authorList>
            <person name="Sylvestre M."/>
            <person name="Hurtubise Y."/>
            <person name="Barriault D."/>
            <person name="Bergeron J."/>
            <person name="Ahmad D."/>
        </authorList>
    </citation>
    <scope>NUCLEOTIDE SEQUENCE [GENOMIC DNA]</scope>
    <scope>CHARACTERIZATION</scope>
    <source>
        <strain>B-356</strain>
    </source>
</reference>
<reference key="2">
    <citation type="journal article" date="1996" name="Gene">
        <title>Sequencing of Comamonas testosteroni strain B-356-biphenyl/chlorobiphenyl dioxygenase genes: evolutionary relationships among Gram-negative bacterial biphenyl dioxygenases.</title>
        <authorList>
            <person name="Sylvestre M."/>
            <person name="Sirois M."/>
            <person name="Hurtubise Y."/>
            <person name="Bergeron J."/>
            <person name="Ahmad D."/>
            <person name="Shareck F."/>
            <person name="Barriault D."/>
            <person name="Guillemette I."/>
            <person name="Juteau J.-M."/>
        </authorList>
    </citation>
    <scope>NUCLEOTIDE SEQUENCE [GENOMIC DNA] OF 1-15</scope>
    <source>
        <strain>B-356</strain>
    </source>
</reference>
<evidence type="ECO:0000250" key="1"/>
<evidence type="ECO:0000255" key="2">
    <source>
        <dbReference type="PROSITE-ProRule" id="PRU10001"/>
    </source>
</evidence>
<evidence type="ECO:0000305" key="3"/>
<evidence type="ECO:0007829" key="4">
    <source>
        <dbReference type="PDB" id="2Y93"/>
    </source>
</evidence>
<evidence type="ECO:0007829" key="5">
    <source>
        <dbReference type="PDB" id="3ZV4"/>
    </source>
</evidence>
<evidence type="ECO:0007829" key="6">
    <source>
        <dbReference type="PDB" id="3ZV6"/>
    </source>
</evidence>
<sequence length="281" mass="29350">MKLTGEVALITGGASGLGRALVDRFVAEGARVAVLDKSAERLRELEVAHGGNAVGVVGDVRSLQDQKRAAERCLAAFGKIDTLIPNAGIWDYSTALADLPEDKIDAAFDDIFHVNVKGYIHAVKACLPALVSSRGSVVFTISNAGFYPNGGGPLYTATKHAVVGLVRQMAFELAPHVRVNGVAPGGMNTDLRGPSSLGLSEQSISSVPLADMLKSVLPIGRMPALEEYTGAYVFFATRGDSLPATGALLNYDGGMGVRGFLTAAGGADLPEKLNINREGQE</sequence>
<dbReference type="EC" id="1.3.1.56"/>
<dbReference type="EMBL" id="U57451">
    <property type="protein sequence ID" value="AAB18304.1"/>
    <property type="molecule type" value="mRNA"/>
</dbReference>
<dbReference type="EMBL" id="U47637">
    <property type="protein sequence ID" value="AAC44530.1"/>
    <property type="molecule type" value="Genomic_DNA"/>
</dbReference>
<dbReference type="PIR" id="PC4213">
    <property type="entry name" value="PC4213"/>
</dbReference>
<dbReference type="PDB" id="2Y93">
    <property type="method" value="X-ray"/>
    <property type="resolution" value="2.22 A"/>
    <property type="chains" value="A/B=1-281"/>
</dbReference>
<dbReference type="PDB" id="2Y99">
    <property type="method" value="X-ray"/>
    <property type="resolution" value="2.50 A"/>
    <property type="chains" value="A/B=1-281"/>
</dbReference>
<dbReference type="PDB" id="3ZV3">
    <property type="method" value="X-ray"/>
    <property type="resolution" value="2.90 A"/>
    <property type="chains" value="A/B=1-281"/>
</dbReference>
<dbReference type="PDB" id="3ZV4">
    <property type="method" value="X-ray"/>
    <property type="resolution" value="1.80 A"/>
    <property type="chains" value="A/B=1-281"/>
</dbReference>
<dbReference type="PDB" id="3ZV5">
    <property type="method" value="X-ray"/>
    <property type="resolution" value="2.40 A"/>
    <property type="chains" value="A/B=1-281"/>
</dbReference>
<dbReference type="PDB" id="3ZV6">
    <property type="method" value="X-ray"/>
    <property type="resolution" value="2.14 A"/>
    <property type="chains" value="A/B=1-281"/>
</dbReference>
<dbReference type="PDBsum" id="2Y93"/>
<dbReference type="PDBsum" id="2Y99"/>
<dbReference type="PDBsum" id="3ZV3"/>
<dbReference type="PDBsum" id="3ZV4"/>
<dbReference type="PDBsum" id="3ZV5"/>
<dbReference type="PDBsum" id="3ZV6"/>
<dbReference type="SMR" id="Q46381"/>
<dbReference type="KEGG" id="ag:AAB18304"/>
<dbReference type="BRENDA" id="1.3.1.56">
    <property type="organism ID" value="1590"/>
</dbReference>
<dbReference type="UniPathway" id="UPA00155">
    <property type="reaction ID" value="UER00251"/>
</dbReference>
<dbReference type="EvolutionaryTrace" id="Q46381"/>
<dbReference type="GO" id="GO:0018509">
    <property type="term" value="F:cis-2,3-dihydrobiphenyl-2,3-diol dehydrogenase activity"/>
    <property type="evidence" value="ECO:0007669"/>
    <property type="project" value="UniProtKB-EC"/>
</dbReference>
<dbReference type="GO" id="GO:0009056">
    <property type="term" value="P:catabolic process"/>
    <property type="evidence" value="ECO:0007669"/>
    <property type="project" value="UniProtKB-KW"/>
</dbReference>
<dbReference type="CDD" id="cd05348">
    <property type="entry name" value="BphB-like_SDR_c"/>
    <property type="match status" value="1"/>
</dbReference>
<dbReference type="FunFam" id="3.40.50.720:FF:000084">
    <property type="entry name" value="Short-chain dehydrogenase reductase"/>
    <property type="match status" value="1"/>
</dbReference>
<dbReference type="Gene3D" id="3.40.50.720">
    <property type="entry name" value="NAD(P)-binding Rossmann-like Domain"/>
    <property type="match status" value="1"/>
</dbReference>
<dbReference type="InterPro" id="IPR047950">
    <property type="entry name" value="BphB-like_SDR"/>
</dbReference>
<dbReference type="InterPro" id="IPR017711">
    <property type="entry name" value="BphB_TodD"/>
</dbReference>
<dbReference type="InterPro" id="IPR036291">
    <property type="entry name" value="NAD(P)-bd_dom_sf"/>
</dbReference>
<dbReference type="InterPro" id="IPR020904">
    <property type="entry name" value="Sc_DH/Rdtase_CS"/>
</dbReference>
<dbReference type="InterPro" id="IPR002347">
    <property type="entry name" value="SDR_fam"/>
</dbReference>
<dbReference type="NCBIfam" id="TIGR03325">
    <property type="entry name" value="BphB_TodD"/>
    <property type="match status" value="1"/>
</dbReference>
<dbReference type="NCBIfam" id="NF004849">
    <property type="entry name" value="PRK06200.1"/>
    <property type="match status" value="1"/>
</dbReference>
<dbReference type="PANTHER" id="PTHR43943:SF17">
    <property type="entry name" value="3-PHENYLPROPIONATE-DIHYDRODIOL_CINNAMIC ACID-DIHYDRODIOL DEHYDROGENASE"/>
    <property type="match status" value="1"/>
</dbReference>
<dbReference type="PANTHER" id="PTHR43943">
    <property type="entry name" value="DEHYDROGENASE/REDUCTASE (SDR FAMILY) MEMBER 4"/>
    <property type="match status" value="1"/>
</dbReference>
<dbReference type="Pfam" id="PF00106">
    <property type="entry name" value="adh_short"/>
    <property type="match status" value="1"/>
</dbReference>
<dbReference type="PRINTS" id="PR00081">
    <property type="entry name" value="GDHRDH"/>
</dbReference>
<dbReference type="PRINTS" id="PR00080">
    <property type="entry name" value="SDRFAMILY"/>
</dbReference>
<dbReference type="SUPFAM" id="SSF51735">
    <property type="entry name" value="NAD(P)-binding Rossmann-fold domains"/>
    <property type="match status" value="1"/>
</dbReference>
<dbReference type="PROSITE" id="PS00061">
    <property type="entry name" value="ADH_SHORT"/>
    <property type="match status" value="1"/>
</dbReference>
<feature type="chain" id="PRO_0000054532" description="Cis-2,3-dihydrobiphenyl-2,3-diol dehydrogenase">
    <location>
        <begin position="1"/>
        <end position="281"/>
    </location>
</feature>
<feature type="active site" description="Proton acceptor" evidence="2">
    <location>
        <position position="155"/>
    </location>
</feature>
<feature type="binding site" evidence="1">
    <location>
        <begin position="10"/>
        <end position="34"/>
    </location>
    <ligand>
        <name>NAD(+)</name>
        <dbReference type="ChEBI" id="CHEBI:57540"/>
    </ligand>
</feature>
<feature type="binding site" evidence="1">
    <location>
        <position position="142"/>
    </location>
    <ligand>
        <name>substrate</name>
    </ligand>
</feature>
<feature type="turn" evidence="5">
    <location>
        <begin position="2"/>
        <end position="5"/>
    </location>
</feature>
<feature type="strand" evidence="5">
    <location>
        <begin position="7"/>
        <end position="11"/>
    </location>
</feature>
<feature type="turn" evidence="6">
    <location>
        <begin position="12"/>
        <end position="14"/>
    </location>
</feature>
<feature type="helix" evidence="5">
    <location>
        <begin position="16"/>
        <end position="27"/>
    </location>
</feature>
<feature type="strand" evidence="5">
    <location>
        <begin position="31"/>
        <end position="37"/>
    </location>
</feature>
<feature type="helix" evidence="5">
    <location>
        <begin position="39"/>
        <end position="48"/>
    </location>
</feature>
<feature type="turn" evidence="4">
    <location>
        <begin position="49"/>
        <end position="51"/>
    </location>
</feature>
<feature type="strand" evidence="5">
    <location>
        <begin position="53"/>
        <end position="57"/>
    </location>
</feature>
<feature type="helix" evidence="5">
    <location>
        <begin position="63"/>
        <end position="77"/>
    </location>
</feature>
<feature type="strand" evidence="5">
    <location>
        <begin position="82"/>
        <end position="84"/>
    </location>
</feature>
<feature type="helix" evidence="5">
    <location>
        <begin position="96"/>
        <end position="98"/>
    </location>
</feature>
<feature type="turn" evidence="5">
    <location>
        <begin position="101"/>
        <end position="103"/>
    </location>
</feature>
<feature type="helix" evidence="5">
    <location>
        <begin position="104"/>
        <end position="115"/>
    </location>
</feature>
<feature type="helix" evidence="5">
    <location>
        <begin position="117"/>
        <end position="133"/>
    </location>
</feature>
<feature type="strand" evidence="5">
    <location>
        <begin position="136"/>
        <end position="140"/>
    </location>
</feature>
<feature type="helix" evidence="5">
    <location>
        <begin position="143"/>
        <end position="145"/>
    </location>
</feature>
<feature type="strand" evidence="5">
    <location>
        <begin position="147"/>
        <end position="151"/>
    </location>
</feature>
<feature type="helix" evidence="5">
    <location>
        <begin position="153"/>
        <end position="173"/>
    </location>
</feature>
<feature type="turn" evidence="5">
    <location>
        <begin position="174"/>
        <end position="176"/>
    </location>
</feature>
<feature type="strand" evidence="5">
    <location>
        <begin position="177"/>
        <end position="184"/>
    </location>
</feature>
<feature type="helix" evidence="6">
    <location>
        <begin position="195"/>
        <end position="197"/>
    </location>
</feature>
<feature type="helix" evidence="6">
    <location>
        <begin position="204"/>
        <end position="206"/>
    </location>
</feature>
<feature type="helix" evidence="5">
    <location>
        <begin position="209"/>
        <end position="215"/>
    </location>
</feature>
<feature type="helix" evidence="5">
    <location>
        <begin position="225"/>
        <end position="228"/>
    </location>
</feature>
<feature type="helix" evidence="5">
    <location>
        <begin position="230"/>
        <end position="236"/>
    </location>
</feature>
<feature type="turn" evidence="5">
    <location>
        <begin position="238"/>
        <end position="240"/>
    </location>
</feature>
<feature type="strand" evidence="5">
    <location>
        <begin position="248"/>
        <end position="254"/>
    </location>
</feature>
<feature type="helix" evidence="5">
    <location>
        <begin position="255"/>
        <end position="257"/>
    </location>
</feature>
<feature type="strand" evidence="5">
    <location>
        <begin position="260"/>
        <end position="263"/>
    </location>
</feature>
<feature type="helix" evidence="5">
    <location>
        <begin position="269"/>
        <end position="272"/>
    </location>
</feature>
<protein>
    <recommendedName>
        <fullName>Cis-2,3-dihydrobiphenyl-2,3-diol dehydrogenase</fullName>
        <ecNumber>1.3.1.56</ecNumber>
    </recommendedName>
    <alternativeName>
        <fullName>2,3-dihydro-2,3-dihydroxybiphenyl dehydrogenase</fullName>
    </alternativeName>
    <alternativeName>
        <fullName>2,3-dihydroxy-4-phenylhexa-4,6-diene dehydrogenase</fullName>
    </alternativeName>
    <alternativeName>
        <fullName>B2,3D</fullName>
    </alternativeName>
    <alternativeName>
        <fullName>Biphenyl-2,3-dihydro-2,3-diol dehydrogenase</fullName>
    </alternativeName>
    <alternativeName>
        <fullName>Biphenyl-cis-diol dehydrogenase</fullName>
    </alternativeName>
</protein>
<proteinExistence type="evidence at protein level"/>
<gene>
    <name type="primary">bphB</name>
</gene>
<keyword id="KW-0002">3D-structure</keyword>
<keyword id="KW-0058">Aromatic hydrocarbons catabolism</keyword>
<keyword id="KW-0520">NAD</keyword>
<keyword id="KW-0560">Oxidoreductase</keyword>
<accession>Q46381</accession>
<accession>Q46376</accession>
<name>BPHB_COMTE</name>
<organism>
    <name type="scientific">Comamonas testosteroni</name>
    <name type="common">Pseudomonas testosteroni</name>
    <dbReference type="NCBI Taxonomy" id="285"/>
    <lineage>
        <taxon>Bacteria</taxon>
        <taxon>Pseudomonadati</taxon>
        <taxon>Pseudomonadota</taxon>
        <taxon>Betaproteobacteria</taxon>
        <taxon>Burkholderiales</taxon>
        <taxon>Comamonadaceae</taxon>
        <taxon>Comamonas</taxon>
    </lineage>
</organism>